<dbReference type="EMBL" id="AM180355">
    <property type="protein sequence ID" value="CAJ68152.1"/>
    <property type="molecule type" value="Genomic_DNA"/>
</dbReference>
<dbReference type="RefSeq" id="WP_003428258.1">
    <property type="nucleotide sequence ID" value="NZ_JAUPES010000027.1"/>
</dbReference>
<dbReference type="RefSeq" id="YP_001087790.1">
    <property type="nucleotide sequence ID" value="NC_009089.1"/>
</dbReference>
<dbReference type="SMR" id="Q18BG3"/>
<dbReference type="STRING" id="272563.CD630_12960"/>
<dbReference type="EnsemblBacteria" id="CAJ68152">
    <property type="protein sequence ID" value="CAJ68152"/>
    <property type="gene ID" value="CD630_12960"/>
</dbReference>
<dbReference type="GeneID" id="66353697"/>
<dbReference type="KEGG" id="cdf:CD630_12960"/>
<dbReference type="KEGG" id="pdc:CDIF630_01450"/>
<dbReference type="PATRIC" id="fig|272563.120.peg.1354"/>
<dbReference type="eggNOG" id="COG1386">
    <property type="taxonomic scope" value="Bacteria"/>
</dbReference>
<dbReference type="OrthoDB" id="9806226at2"/>
<dbReference type="PhylomeDB" id="Q18BG3"/>
<dbReference type="BioCyc" id="PDIF272563:G12WB-1430-MONOMER"/>
<dbReference type="Proteomes" id="UP000001978">
    <property type="component" value="Chromosome"/>
</dbReference>
<dbReference type="GO" id="GO:0005737">
    <property type="term" value="C:cytoplasm"/>
    <property type="evidence" value="ECO:0007669"/>
    <property type="project" value="UniProtKB-SubCell"/>
</dbReference>
<dbReference type="GO" id="GO:0051301">
    <property type="term" value="P:cell division"/>
    <property type="evidence" value="ECO:0007669"/>
    <property type="project" value="UniProtKB-KW"/>
</dbReference>
<dbReference type="GO" id="GO:0051304">
    <property type="term" value="P:chromosome separation"/>
    <property type="evidence" value="ECO:0007669"/>
    <property type="project" value="InterPro"/>
</dbReference>
<dbReference type="GO" id="GO:0006260">
    <property type="term" value="P:DNA replication"/>
    <property type="evidence" value="ECO:0007669"/>
    <property type="project" value="UniProtKB-UniRule"/>
</dbReference>
<dbReference type="Gene3D" id="1.10.10.10">
    <property type="entry name" value="Winged helix-like DNA-binding domain superfamily/Winged helix DNA-binding domain"/>
    <property type="match status" value="2"/>
</dbReference>
<dbReference type="HAMAP" id="MF_01804">
    <property type="entry name" value="ScpB"/>
    <property type="match status" value="1"/>
</dbReference>
<dbReference type="InterPro" id="IPR005234">
    <property type="entry name" value="ScpB_csome_segregation"/>
</dbReference>
<dbReference type="InterPro" id="IPR036388">
    <property type="entry name" value="WH-like_DNA-bd_sf"/>
</dbReference>
<dbReference type="InterPro" id="IPR036390">
    <property type="entry name" value="WH_DNA-bd_sf"/>
</dbReference>
<dbReference type="NCBIfam" id="TIGR00281">
    <property type="entry name" value="SMC-Scp complex subunit ScpB"/>
    <property type="match status" value="1"/>
</dbReference>
<dbReference type="PANTHER" id="PTHR34298">
    <property type="entry name" value="SEGREGATION AND CONDENSATION PROTEIN B"/>
    <property type="match status" value="1"/>
</dbReference>
<dbReference type="PANTHER" id="PTHR34298:SF2">
    <property type="entry name" value="SEGREGATION AND CONDENSATION PROTEIN B"/>
    <property type="match status" value="1"/>
</dbReference>
<dbReference type="Pfam" id="PF04079">
    <property type="entry name" value="SMC_ScpB"/>
    <property type="match status" value="1"/>
</dbReference>
<dbReference type="PIRSF" id="PIRSF019345">
    <property type="entry name" value="ScpB"/>
    <property type="match status" value="1"/>
</dbReference>
<dbReference type="SUPFAM" id="SSF46785">
    <property type="entry name" value="Winged helix' DNA-binding domain"/>
    <property type="match status" value="2"/>
</dbReference>
<name>SCPB_CLOD6</name>
<proteinExistence type="inferred from homology"/>
<feature type="chain" id="PRO_0000273297" description="Segregation and condensation protein B">
    <location>
        <begin position="1"/>
        <end position="179"/>
    </location>
</feature>
<protein>
    <recommendedName>
        <fullName evidence="1">Segregation and condensation protein B</fullName>
    </recommendedName>
</protein>
<keyword id="KW-0131">Cell cycle</keyword>
<keyword id="KW-0132">Cell division</keyword>
<keyword id="KW-0159">Chromosome partition</keyword>
<keyword id="KW-0963">Cytoplasm</keyword>
<keyword id="KW-1185">Reference proteome</keyword>
<comment type="function">
    <text evidence="1">Participates in chromosomal partition during cell division. May act via the formation of a condensin-like complex containing Smc and ScpA that pull DNA away from mid-cell into both cell halves.</text>
</comment>
<comment type="subunit">
    <text evidence="1">Homodimer. Homodimerization may be required to stabilize the binding of ScpA to the Smc head domains. Component of a cohesin-like complex composed of ScpA, ScpB and the Smc homodimer, in which ScpA and ScpB bind to the head domain of Smc. The presence of the three proteins is required for the association of the complex with DNA.</text>
</comment>
<comment type="subcellular location">
    <subcellularLocation>
        <location evidence="1">Cytoplasm</location>
    </subcellularLocation>
    <text evidence="1">Associated with two foci at the outer edges of the nucleoid region in young cells, and at four foci within both cell halves in older cells.</text>
</comment>
<comment type="similarity">
    <text evidence="1">Belongs to the ScpB family.</text>
</comment>
<evidence type="ECO:0000255" key="1">
    <source>
        <dbReference type="HAMAP-Rule" id="MF_01804"/>
    </source>
</evidence>
<accession>Q18BG3</accession>
<reference key="1">
    <citation type="journal article" date="2006" name="Nat. Genet.">
        <title>The multidrug-resistant human pathogen Clostridium difficile has a highly mobile, mosaic genome.</title>
        <authorList>
            <person name="Sebaihia M."/>
            <person name="Wren B.W."/>
            <person name="Mullany P."/>
            <person name="Fairweather N.F."/>
            <person name="Minton N."/>
            <person name="Stabler R."/>
            <person name="Thomson N.R."/>
            <person name="Roberts A.P."/>
            <person name="Cerdeno-Tarraga A.M."/>
            <person name="Wang H."/>
            <person name="Holden M.T.G."/>
            <person name="Wright A."/>
            <person name="Churcher C."/>
            <person name="Quail M.A."/>
            <person name="Baker S."/>
            <person name="Bason N."/>
            <person name="Brooks K."/>
            <person name="Chillingworth T."/>
            <person name="Cronin A."/>
            <person name="Davis P."/>
            <person name="Dowd L."/>
            <person name="Fraser A."/>
            <person name="Feltwell T."/>
            <person name="Hance Z."/>
            <person name="Holroyd S."/>
            <person name="Jagels K."/>
            <person name="Moule S."/>
            <person name="Mungall K."/>
            <person name="Price C."/>
            <person name="Rabbinowitsch E."/>
            <person name="Sharp S."/>
            <person name="Simmonds M."/>
            <person name="Stevens K."/>
            <person name="Unwin L."/>
            <person name="Whithead S."/>
            <person name="Dupuy B."/>
            <person name="Dougan G."/>
            <person name="Barrell B."/>
            <person name="Parkhill J."/>
        </authorList>
    </citation>
    <scope>NUCLEOTIDE SEQUENCE [LARGE SCALE GENOMIC DNA]</scope>
    <source>
        <strain>630</strain>
    </source>
</reference>
<sequence>MKREDIKYIIESVMFAYGEPISIKELNYIINKELSSKEIEIMLNLLIEEYREQNRGIQIIKLENKYQMCTNKDYAEYIKKIIEPKKKKSLSQATLETLTIIAYKQPITKVEIEDIRGVKCDKVLQTLFENELIREAGRLNKIGKPIIYKTTDEFLKLLNIESLEELPPIENYQEVATNE</sequence>
<gene>
    <name evidence="1" type="primary">scpB</name>
    <name type="ordered locus">CD630_12960</name>
</gene>
<organism>
    <name type="scientific">Clostridioides difficile (strain 630)</name>
    <name type="common">Peptoclostridium difficile</name>
    <dbReference type="NCBI Taxonomy" id="272563"/>
    <lineage>
        <taxon>Bacteria</taxon>
        <taxon>Bacillati</taxon>
        <taxon>Bacillota</taxon>
        <taxon>Clostridia</taxon>
        <taxon>Peptostreptococcales</taxon>
        <taxon>Peptostreptococcaceae</taxon>
        <taxon>Clostridioides</taxon>
    </lineage>
</organism>